<reference key="1">
    <citation type="journal article" date="2004" name="Science">
        <title>The genome of the diatom Thalassiosira pseudonana: ecology, evolution, and metabolism.</title>
        <authorList>
            <person name="Armbrust E.V."/>
            <person name="Berges J.A."/>
            <person name="Bowler C."/>
            <person name="Green B.R."/>
            <person name="Martinez D."/>
            <person name="Putnam N.H."/>
            <person name="Zhou S."/>
            <person name="Allen A.E."/>
            <person name="Apt K.E."/>
            <person name="Bechner M."/>
            <person name="Brzezinski M.A."/>
            <person name="Chaal B.K."/>
            <person name="Chiovitti A."/>
            <person name="Davis A.K."/>
            <person name="Demarest M.S."/>
            <person name="Detter J.C."/>
            <person name="Glavina T."/>
            <person name="Goodstein D."/>
            <person name="Hadi M.Z."/>
            <person name="Hellsten U."/>
            <person name="Hildebrand M."/>
            <person name="Jenkins B.D."/>
            <person name="Jurka J."/>
            <person name="Kapitonov V.V."/>
            <person name="Kroger N."/>
            <person name="Lau W.W."/>
            <person name="Lane T.W."/>
            <person name="Larimer F.W."/>
            <person name="Lippmeier J.C."/>
            <person name="Lucas S."/>
            <person name="Medina M."/>
            <person name="Montsant A."/>
            <person name="Obornik M."/>
            <person name="Parker M.S."/>
            <person name="Palenik B."/>
            <person name="Pazour G.J."/>
            <person name="Richardson P.M."/>
            <person name="Rynearson T.A."/>
            <person name="Saito M.A."/>
            <person name="Schwartz D.C."/>
            <person name="Thamatrakoln K."/>
            <person name="Valentin K."/>
            <person name="Vardi A."/>
            <person name="Wilkerson F.P."/>
            <person name="Rokhsar D.S."/>
        </authorList>
    </citation>
    <scope>NUCLEOTIDE SEQUENCE [LARGE SCALE GENOMIC DNA]</scope>
    <source>
        <strain>CCMP1335 / NEPCC58 / CCAP 1085/12</strain>
    </source>
</reference>
<reference key="2">
    <citation type="submission" date="2008-09" db="EMBL/GenBank/DDBJ databases">
        <authorList>
            <consortium name="Diatom Consortium"/>
            <person name="Grigoriev I."/>
            <person name="Grimwood J."/>
            <person name="Kuo A."/>
            <person name="Otillar R.P."/>
            <person name="Salamov A."/>
            <person name="Detter J.C."/>
            <person name="Schmutz J."/>
            <person name="Lindquist E."/>
            <person name="Shapiro H."/>
            <person name="Lucas S."/>
            <person name="Glavina del Rio T."/>
            <person name="Bruce D."/>
            <person name="Pitluck S."/>
            <person name="Rokhsar D."/>
            <person name="Armbrust V."/>
        </authorList>
    </citation>
    <scope>GENOME REANNOTATION</scope>
    <source>
        <strain>CCMP1335 / NEPCC58 / CCAP 1085/12</strain>
    </source>
</reference>
<proteinExistence type="inferred from homology"/>
<feature type="chain" id="PRO_0000402865" description="Translation factor GUF1 homolog, mitochondrial">
    <location>
        <begin position="1"/>
        <end position="706"/>
    </location>
</feature>
<feature type="domain" description="tr-type G">
    <location>
        <begin position="89"/>
        <end position="272"/>
    </location>
</feature>
<feature type="binding site" evidence="1">
    <location>
        <begin position="98"/>
        <end position="105"/>
    </location>
    <ligand>
        <name>GTP</name>
        <dbReference type="ChEBI" id="CHEBI:37565"/>
    </ligand>
</feature>
<feature type="binding site" evidence="1">
    <location>
        <begin position="165"/>
        <end position="169"/>
    </location>
    <ligand>
        <name>GTP</name>
        <dbReference type="ChEBI" id="CHEBI:37565"/>
    </ligand>
</feature>
<feature type="binding site" evidence="1">
    <location>
        <begin position="219"/>
        <end position="222"/>
    </location>
    <ligand>
        <name>GTP</name>
        <dbReference type="ChEBI" id="CHEBI:37565"/>
    </ligand>
</feature>
<keyword id="KW-0342">GTP-binding</keyword>
<keyword id="KW-0378">Hydrolase</keyword>
<keyword id="KW-0472">Membrane</keyword>
<keyword id="KW-0496">Mitochondrion</keyword>
<keyword id="KW-0999">Mitochondrion inner membrane</keyword>
<keyword id="KW-0547">Nucleotide-binding</keyword>
<keyword id="KW-0648">Protein biosynthesis</keyword>
<keyword id="KW-1185">Reference proteome</keyword>
<gene>
    <name type="ORF">THAPSDRAFT_40001</name>
</gene>
<comment type="function">
    <text evidence="1">Promotes mitochondrial protein synthesis. May act as a fidelity factor of the translation reaction, by catalyzing a one-codon backward translocation of tRNAs on improperly translocated ribosomes. Binds to mitochondrial ribosomes in a GTP-dependent manner.</text>
</comment>
<comment type="catalytic activity">
    <reaction evidence="1">
        <text>GTP + H2O = GDP + phosphate + H(+)</text>
        <dbReference type="Rhea" id="RHEA:19669"/>
        <dbReference type="ChEBI" id="CHEBI:15377"/>
        <dbReference type="ChEBI" id="CHEBI:15378"/>
        <dbReference type="ChEBI" id="CHEBI:37565"/>
        <dbReference type="ChEBI" id="CHEBI:43474"/>
        <dbReference type="ChEBI" id="CHEBI:58189"/>
    </reaction>
</comment>
<comment type="subcellular location">
    <subcellularLocation>
        <location evidence="1">Mitochondrion inner membrane</location>
        <topology evidence="1">Peripheral membrane protein</topology>
        <orientation evidence="1">Matrix side</orientation>
    </subcellularLocation>
</comment>
<comment type="miscellaneous">
    <text evidence="1">This protein may be expected to contain an N-terminal transit peptide but none has been predicted.</text>
</comment>
<comment type="similarity">
    <text evidence="2">Belongs to the TRAFAC class translation factor GTPase superfamily. Classic translation factor GTPase family. LepA subfamily.</text>
</comment>
<protein>
    <recommendedName>
        <fullName evidence="1">Translation factor GUF1 homolog, mitochondrial</fullName>
        <ecNumber>3.6.5.-</ecNumber>
    </recommendedName>
    <alternativeName>
        <fullName evidence="1">Elongation factor 4 homolog</fullName>
        <shortName evidence="1">EF-4</shortName>
    </alternativeName>
    <alternativeName>
        <fullName evidence="1">GTPase GUF1 homolog</fullName>
    </alternativeName>
    <alternativeName>
        <fullName evidence="1">Ribosomal back-translocase</fullName>
    </alternativeName>
</protein>
<name>GUF1_THAPS</name>
<organism>
    <name type="scientific">Thalassiosira pseudonana</name>
    <name type="common">Marine diatom</name>
    <name type="synonym">Cyclotella nana</name>
    <dbReference type="NCBI Taxonomy" id="35128"/>
    <lineage>
        <taxon>Eukaryota</taxon>
        <taxon>Sar</taxon>
        <taxon>Stramenopiles</taxon>
        <taxon>Ochrophyta</taxon>
        <taxon>Bacillariophyta</taxon>
        <taxon>Coscinodiscophyceae</taxon>
        <taxon>Thalassiosirophycidae</taxon>
        <taxon>Thalassiosirales</taxon>
        <taxon>Thalassiosiraceae</taxon>
        <taxon>Thalassiosira</taxon>
    </lineage>
</organism>
<evidence type="ECO:0000255" key="1">
    <source>
        <dbReference type="HAMAP-Rule" id="MF_03137"/>
    </source>
</evidence>
<evidence type="ECO:0000305" key="2"/>
<dbReference type="EC" id="3.6.5.-"/>
<dbReference type="EMBL" id="CM000640">
    <property type="protein sequence ID" value="EED93888.1"/>
    <property type="molecule type" value="Genomic_DNA"/>
</dbReference>
<dbReference type="RefSeq" id="XP_002288452.1">
    <property type="nucleotide sequence ID" value="XM_002288416.1"/>
</dbReference>
<dbReference type="SMR" id="B8BYH3"/>
<dbReference type="FunCoup" id="B8BYH3">
    <property type="interactions" value="236"/>
</dbReference>
<dbReference type="STRING" id="35128.B8BYH3"/>
<dbReference type="PaxDb" id="35128-Thaps40001"/>
<dbReference type="EnsemblProtists" id="EED93888">
    <property type="protein sequence ID" value="EED93888"/>
    <property type="gene ID" value="THAPSDRAFT_40001"/>
</dbReference>
<dbReference type="GeneID" id="7451309"/>
<dbReference type="KEGG" id="tps:THAPSDRAFT_40001"/>
<dbReference type="eggNOG" id="KOG0462">
    <property type="taxonomic scope" value="Eukaryota"/>
</dbReference>
<dbReference type="InParanoid" id="B8BYH3"/>
<dbReference type="OMA" id="EYSFVGY"/>
<dbReference type="Proteomes" id="UP000001449">
    <property type="component" value="Chromosome 3"/>
</dbReference>
<dbReference type="GO" id="GO:0005743">
    <property type="term" value="C:mitochondrial inner membrane"/>
    <property type="evidence" value="ECO:0007669"/>
    <property type="project" value="UniProtKB-SubCell"/>
</dbReference>
<dbReference type="GO" id="GO:0005759">
    <property type="term" value="C:mitochondrial matrix"/>
    <property type="evidence" value="ECO:0007669"/>
    <property type="project" value="UniProtKB-UniRule"/>
</dbReference>
<dbReference type="GO" id="GO:0005525">
    <property type="term" value="F:GTP binding"/>
    <property type="evidence" value="ECO:0007669"/>
    <property type="project" value="UniProtKB-UniRule"/>
</dbReference>
<dbReference type="GO" id="GO:0003924">
    <property type="term" value="F:GTPase activity"/>
    <property type="evidence" value="ECO:0007669"/>
    <property type="project" value="UniProtKB-UniRule"/>
</dbReference>
<dbReference type="GO" id="GO:0043022">
    <property type="term" value="F:ribosome binding"/>
    <property type="evidence" value="ECO:0000318"/>
    <property type="project" value="GO_Central"/>
</dbReference>
<dbReference type="GO" id="GO:0045727">
    <property type="term" value="P:positive regulation of translation"/>
    <property type="evidence" value="ECO:0000318"/>
    <property type="project" value="GO_Central"/>
</dbReference>
<dbReference type="GO" id="GO:0006412">
    <property type="term" value="P:translation"/>
    <property type="evidence" value="ECO:0007669"/>
    <property type="project" value="UniProtKB-KW"/>
</dbReference>
<dbReference type="CDD" id="cd03699">
    <property type="entry name" value="EF4_II"/>
    <property type="match status" value="1"/>
</dbReference>
<dbReference type="CDD" id="cd16260">
    <property type="entry name" value="EF4_III"/>
    <property type="match status" value="1"/>
</dbReference>
<dbReference type="CDD" id="cd01890">
    <property type="entry name" value="LepA"/>
    <property type="match status" value="1"/>
</dbReference>
<dbReference type="CDD" id="cd03709">
    <property type="entry name" value="lepA_C"/>
    <property type="match status" value="1"/>
</dbReference>
<dbReference type="FunFam" id="3.40.50.300:FF:000078">
    <property type="entry name" value="Elongation factor 4"/>
    <property type="match status" value="1"/>
</dbReference>
<dbReference type="FunFam" id="2.40.30.10:FF:000015">
    <property type="entry name" value="Translation factor GUF1, mitochondrial"/>
    <property type="match status" value="1"/>
</dbReference>
<dbReference type="FunFam" id="3.30.70.2570:FF:000001">
    <property type="entry name" value="Translation factor GUF1, mitochondrial"/>
    <property type="match status" value="1"/>
</dbReference>
<dbReference type="FunFam" id="3.30.70.870:FF:000004">
    <property type="entry name" value="Translation factor GUF1, mitochondrial"/>
    <property type="match status" value="1"/>
</dbReference>
<dbReference type="Gene3D" id="3.30.70.240">
    <property type="match status" value="1"/>
</dbReference>
<dbReference type="Gene3D" id="3.30.70.2570">
    <property type="entry name" value="Elongation factor 4, C-terminal domain"/>
    <property type="match status" value="1"/>
</dbReference>
<dbReference type="Gene3D" id="3.30.70.870">
    <property type="entry name" value="Elongation Factor G (Translational Gtpase), domain 3"/>
    <property type="match status" value="1"/>
</dbReference>
<dbReference type="Gene3D" id="3.40.50.300">
    <property type="entry name" value="P-loop containing nucleotide triphosphate hydrolases"/>
    <property type="match status" value="1"/>
</dbReference>
<dbReference type="Gene3D" id="2.40.30.10">
    <property type="entry name" value="Translation factors"/>
    <property type="match status" value="1"/>
</dbReference>
<dbReference type="HAMAP" id="MF_00071">
    <property type="entry name" value="LepA"/>
    <property type="match status" value="1"/>
</dbReference>
<dbReference type="InterPro" id="IPR006297">
    <property type="entry name" value="EF-4"/>
</dbReference>
<dbReference type="InterPro" id="IPR035647">
    <property type="entry name" value="EFG_III/V"/>
</dbReference>
<dbReference type="InterPro" id="IPR000640">
    <property type="entry name" value="EFG_V-like"/>
</dbReference>
<dbReference type="InterPro" id="IPR004161">
    <property type="entry name" value="EFTu-like_2"/>
</dbReference>
<dbReference type="InterPro" id="IPR031157">
    <property type="entry name" value="G_TR_CS"/>
</dbReference>
<dbReference type="InterPro" id="IPR038363">
    <property type="entry name" value="LepA_C_sf"/>
</dbReference>
<dbReference type="InterPro" id="IPR013842">
    <property type="entry name" value="LepA_CTD"/>
</dbReference>
<dbReference type="InterPro" id="IPR035654">
    <property type="entry name" value="LepA_IV"/>
</dbReference>
<dbReference type="InterPro" id="IPR027417">
    <property type="entry name" value="P-loop_NTPase"/>
</dbReference>
<dbReference type="InterPro" id="IPR005225">
    <property type="entry name" value="Small_GTP-bd"/>
</dbReference>
<dbReference type="InterPro" id="IPR000795">
    <property type="entry name" value="T_Tr_GTP-bd_dom"/>
</dbReference>
<dbReference type="InterPro" id="IPR009000">
    <property type="entry name" value="Transl_B-barrel_sf"/>
</dbReference>
<dbReference type="NCBIfam" id="TIGR01393">
    <property type="entry name" value="lepA"/>
    <property type="match status" value="1"/>
</dbReference>
<dbReference type="NCBIfam" id="TIGR00231">
    <property type="entry name" value="small_GTP"/>
    <property type="match status" value="1"/>
</dbReference>
<dbReference type="PANTHER" id="PTHR43512:SF4">
    <property type="entry name" value="TRANSLATION FACTOR GUF1 HOMOLOG, CHLOROPLASTIC"/>
    <property type="match status" value="1"/>
</dbReference>
<dbReference type="PANTHER" id="PTHR43512">
    <property type="entry name" value="TRANSLATION FACTOR GUF1-RELATED"/>
    <property type="match status" value="1"/>
</dbReference>
<dbReference type="Pfam" id="PF00679">
    <property type="entry name" value="EFG_C"/>
    <property type="match status" value="1"/>
</dbReference>
<dbReference type="Pfam" id="PF00009">
    <property type="entry name" value="GTP_EFTU"/>
    <property type="match status" value="1"/>
</dbReference>
<dbReference type="Pfam" id="PF03144">
    <property type="entry name" value="GTP_EFTU_D2"/>
    <property type="match status" value="1"/>
</dbReference>
<dbReference type="Pfam" id="PF06421">
    <property type="entry name" value="LepA_C"/>
    <property type="match status" value="1"/>
</dbReference>
<dbReference type="PRINTS" id="PR00315">
    <property type="entry name" value="ELONGATNFCT"/>
</dbReference>
<dbReference type="SMART" id="SM00838">
    <property type="entry name" value="EFG_C"/>
    <property type="match status" value="1"/>
</dbReference>
<dbReference type="SUPFAM" id="SSF54980">
    <property type="entry name" value="EF-G C-terminal domain-like"/>
    <property type="match status" value="2"/>
</dbReference>
<dbReference type="SUPFAM" id="SSF52540">
    <property type="entry name" value="P-loop containing nucleoside triphosphate hydrolases"/>
    <property type="match status" value="1"/>
</dbReference>
<dbReference type="SUPFAM" id="SSF50447">
    <property type="entry name" value="Translation proteins"/>
    <property type="match status" value="1"/>
</dbReference>
<dbReference type="PROSITE" id="PS00301">
    <property type="entry name" value="G_TR_1"/>
    <property type="match status" value="1"/>
</dbReference>
<dbReference type="PROSITE" id="PS51722">
    <property type="entry name" value="G_TR_2"/>
    <property type="match status" value="1"/>
</dbReference>
<sequence>MKFIHLAMTLAYSLPHIVDAFSTLSHQRIRTSNVGVSSIFTNSQRITTFSATPTTRRTTSLFSTTENKKSSELVSNQDLGLGTSGFSTSRIRNFSIIAHIDHGKSTLADRLLESTQTVAARDMAAQLLDNMDLERERGITIKLQAARVLYKSEVDGEMYILNLIDTPGHVDFSYEVSRSLAACEGALLVVDASQGVEAQTLANVYLALENNLEIIPVLNKIDLPAADPDRVAEEIEETIGIDCSDAVRASAKSGIGINDILESIVKNVPPPQPDTGGPFRALIFDSLFDPYRGVIVFFRVVDGAVKKGQKVRFLASKAEHDVTEVGIMQPNQVQVDCLRAGEVGYLCGSIKDVLDARVGDTITLSSEYKAAAAKLDPKSEEDPITPLPGYSESIPMVYCGIFPVDADQYENLRDALGKLRLNDAAISYEPETSGAMGFGFRCGFLGLLHMDVIRERLEREFDLDLIVTAPSVVYRVEKGEGDSKTVEIVDAPSKMPEILREMKVMEPYVRMEILTPSEYNGQIIELGQERRGILKDINYLTPTRSTIVYEVPLAEVITDFFDQLKSRTQGYASMEYQLIEYREGDLVRLDVKINYEDAPPLATIVHVDAAQTVGRRLVASLKELIPRQMFKVPIQACIGVKVIASASISPMRKDVLAKCYGGDLSRKKKLLQKQAKGKKRMKAMGKVNVPQEAFMAVIKLNKSAGD</sequence>
<accession>B8BYH3</accession>